<evidence type="ECO:0000250" key="1"/>
<evidence type="ECO:0000250" key="2">
    <source>
        <dbReference type="UniProtKB" id="P00157"/>
    </source>
</evidence>
<evidence type="ECO:0000255" key="3">
    <source>
        <dbReference type="PROSITE-ProRule" id="PRU00967"/>
    </source>
</evidence>
<evidence type="ECO:0000255" key="4">
    <source>
        <dbReference type="PROSITE-ProRule" id="PRU00968"/>
    </source>
</evidence>
<organism>
    <name type="scientific">Balaena mysticetus</name>
    <name type="common">Bowhead whale</name>
    <dbReference type="NCBI Taxonomy" id="27602"/>
    <lineage>
        <taxon>Eukaryota</taxon>
        <taxon>Metazoa</taxon>
        <taxon>Chordata</taxon>
        <taxon>Craniata</taxon>
        <taxon>Vertebrata</taxon>
        <taxon>Euteleostomi</taxon>
        <taxon>Mammalia</taxon>
        <taxon>Eutheria</taxon>
        <taxon>Laurasiatheria</taxon>
        <taxon>Artiodactyla</taxon>
        <taxon>Whippomorpha</taxon>
        <taxon>Cetacea</taxon>
        <taxon>Mysticeti</taxon>
        <taxon>Balaenidae</taxon>
        <taxon>Balaena</taxon>
    </lineage>
</organism>
<feature type="chain" id="PRO_0000060664" description="Cytochrome b">
    <location>
        <begin position="1"/>
        <end position="379"/>
    </location>
</feature>
<feature type="transmembrane region" description="Helical" evidence="2">
    <location>
        <begin position="33"/>
        <end position="53"/>
    </location>
</feature>
<feature type="transmembrane region" description="Helical" evidence="2">
    <location>
        <begin position="77"/>
        <end position="98"/>
    </location>
</feature>
<feature type="transmembrane region" description="Helical" evidence="2">
    <location>
        <begin position="113"/>
        <end position="133"/>
    </location>
</feature>
<feature type="transmembrane region" description="Helical" evidence="2">
    <location>
        <begin position="178"/>
        <end position="198"/>
    </location>
</feature>
<feature type="transmembrane region" description="Helical" evidence="2">
    <location>
        <begin position="226"/>
        <end position="246"/>
    </location>
</feature>
<feature type="transmembrane region" description="Helical" evidence="2">
    <location>
        <begin position="288"/>
        <end position="308"/>
    </location>
</feature>
<feature type="transmembrane region" description="Helical" evidence="2">
    <location>
        <begin position="320"/>
        <end position="340"/>
    </location>
</feature>
<feature type="transmembrane region" description="Helical" evidence="2">
    <location>
        <begin position="347"/>
        <end position="367"/>
    </location>
</feature>
<feature type="binding site" description="axial binding residue" evidence="2">
    <location>
        <position position="83"/>
    </location>
    <ligand>
        <name>heme b</name>
        <dbReference type="ChEBI" id="CHEBI:60344"/>
        <label>b562</label>
    </ligand>
    <ligandPart>
        <name>Fe</name>
        <dbReference type="ChEBI" id="CHEBI:18248"/>
    </ligandPart>
</feature>
<feature type="binding site" description="axial binding residue" evidence="2">
    <location>
        <position position="97"/>
    </location>
    <ligand>
        <name>heme b</name>
        <dbReference type="ChEBI" id="CHEBI:60344"/>
        <label>b566</label>
    </ligand>
    <ligandPart>
        <name>Fe</name>
        <dbReference type="ChEBI" id="CHEBI:18248"/>
    </ligandPart>
</feature>
<feature type="binding site" description="axial binding residue" evidence="2">
    <location>
        <position position="182"/>
    </location>
    <ligand>
        <name>heme b</name>
        <dbReference type="ChEBI" id="CHEBI:60344"/>
        <label>b562</label>
    </ligand>
    <ligandPart>
        <name>Fe</name>
        <dbReference type="ChEBI" id="CHEBI:18248"/>
    </ligandPart>
</feature>
<feature type="binding site" description="axial binding residue" evidence="2">
    <location>
        <position position="196"/>
    </location>
    <ligand>
        <name>heme b</name>
        <dbReference type="ChEBI" id="CHEBI:60344"/>
        <label>b566</label>
    </ligand>
    <ligandPart>
        <name>Fe</name>
        <dbReference type="ChEBI" id="CHEBI:18248"/>
    </ligandPart>
</feature>
<feature type="binding site" evidence="2">
    <location>
        <position position="201"/>
    </location>
    <ligand>
        <name>a ubiquinone</name>
        <dbReference type="ChEBI" id="CHEBI:16389"/>
    </ligand>
</feature>
<name>CYB_BALMY</name>
<gene>
    <name type="primary">MT-CYB</name>
    <name type="synonym">COB</name>
    <name type="synonym">CYTB</name>
    <name type="synonym">MTCYB</name>
</gene>
<sequence>MTNIRKTHPLMKIINDAFIDLPTPSNISSWWNFGSLLGLCLIMQILTGLFLAMHYTPDTTTAFSSITHICRDVNYGWIIRYLHANGASMFFICLYAHMGRGLYYGSHAFQETWNIGVILLFTVMATAFVGYVLPWGQMSFWGATVITNLLSAIPYVGNTLVEWIWGGFSVDKATLTRFFAFHFILPFIILALAIVHLLFLHETGSNNPTGIPSDMDKIPFHPYYTIKDILGALLLILALLMLTLFAPDLLGDPDNYTPANPLSTPAHIKPEWYFLFAYAILRSIPNKLGGVLALLLSILILAFIPMLHTSKQRSMMFRPFSQFLFWMLVADLLTLTWIGGQPVEHPYVIVGQFASILYFLLILVLMPVASLIENKLMKW</sequence>
<comment type="function">
    <text evidence="2">Component of the ubiquinol-cytochrome c reductase complex (complex III or cytochrome b-c1 complex) that is part of the mitochondrial respiratory chain. The b-c1 complex mediates electron transfer from ubiquinol to cytochrome c. Contributes to the generation of a proton gradient across the mitochondrial membrane that is then used for ATP synthesis.</text>
</comment>
<comment type="cofactor">
    <cofactor evidence="2">
        <name>heme b</name>
        <dbReference type="ChEBI" id="CHEBI:60344"/>
    </cofactor>
    <text evidence="2">Binds 2 heme b groups non-covalently.</text>
</comment>
<comment type="subunit">
    <text evidence="2">The cytochrome bc1 complex contains 11 subunits: 3 respiratory subunits (MT-CYB, CYC1 and UQCRFS1), 2 core proteins (UQCRC1 and UQCRC2) and 6 low-molecular weight proteins (UQCRH/QCR6, UQCRB/QCR7, UQCRQ/QCR8, UQCR10/QCR9, UQCR11/QCR10 and a cleavage product of UQCRFS1). This cytochrome bc1 complex then forms a dimer.</text>
</comment>
<comment type="subcellular location">
    <subcellularLocation>
        <location evidence="2">Mitochondrion inner membrane</location>
        <topology evidence="2">Multi-pass membrane protein</topology>
    </subcellularLocation>
</comment>
<comment type="miscellaneous">
    <text evidence="1">Heme 1 (or BL or b562) is low-potential and absorbs at about 562 nm, and heme 2 (or BH or b566) is high-potential and absorbs at about 566 nm.</text>
</comment>
<comment type="similarity">
    <text evidence="3 4">Belongs to the cytochrome b family.</text>
</comment>
<comment type="caution">
    <text evidence="2">The full-length protein contains only eight transmembrane helices, not nine as predicted by bioinformatics tools.</text>
</comment>
<reference key="1">
    <citation type="journal article" date="1994" name="Nature">
        <title>Relationship of baleen whales established by cytochrome b gene sequence comparison.</title>
        <authorList>
            <person name="Arnason U."/>
            <person name="Gullberg A."/>
        </authorList>
    </citation>
    <scope>NUCLEOTIDE SEQUENCE [GENOMIC DNA]</scope>
</reference>
<protein>
    <recommendedName>
        <fullName>Cytochrome b</fullName>
    </recommendedName>
    <alternativeName>
        <fullName>Complex III subunit 3</fullName>
    </alternativeName>
    <alternativeName>
        <fullName>Complex III subunit III</fullName>
    </alternativeName>
    <alternativeName>
        <fullName>Cytochrome b-c1 complex subunit 3</fullName>
    </alternativeName>
    <alternativeName>
        <fullName>Ubiquinol-cytochrome-c reductase complex cytochrome b subunit</fullName>
    </alternativeName>
</protein>
<geneLocation type="mitochondrion"/>
<dbReference type="EMBL" id="X75588">
    <property type="protein sequence ID" value="CAA53264.1"/>
    <property type="molecule type" value="Genomic_DNA"/>
</dbReference>
<dbReference type="PIR" id="S43266">
    <property type="entry name" value="S43266"/>
</dbReference>
<dbReference type="RefSeq" id="NP_944619.1">
    <property type="nucleotide sequence ID" value="NC_005268.1"/>
</dbReference>
<dbReference type="SMR" id="P41286"/>
<dbReference type="GeneID" id="2658552"/>
<dbReference type="CTD" id="4519"/>
<dbReference type="GO" id="GO:0005743">
    <property type="term" value="C:mitochondrial inner membrane"/>
    <property type="evidence" value="ECO:0007669"/>
    <property type="project" value="UniProtKB-SubCell"/>
</dbReference>
<dbReference type="GO" id="GO:0045275">
    <property type="term" value="C:respiratory chain complex III"/>
    <property type="evidence" value="ECO:0007669"/>
    <property type="project" value="InterPro"/>
</dbReference>
<dbReference type="GO" id="GO:0046872">
    <property type="term" value="F:metal ion binding"/>
    <property type="evidence" value="ECO:0007669"/>
    <property type="project" value="UniProtKB-KW"/>
</dbReference>
<dbReference type="GO" id="GO:0008121">
    <property type="term" value="F:ubiquinol-cytochrome-c reductase activity"/>
    <property type="evidence" value="ECO:0007669"/>
    <property type="project" value="InterPro"/>
</dbReference>
<dbReference type="GO" id="GO:0006122">
    <property type="term" value="P:mitochondrial electron transport, ubiquinol to cytochrome c"/>
    <property type="evidence" value="ECO:0007669"/>
    <property type="project" value="TreeGrafter"/>
</dbReference>
<dbReference type="CDD" id="cd00290">
    <property type="entry name" value="cytochrome_b_C"/>
    <property type="match status" value="1"/>
</dbReference>
<dbReference type="CDD" id="cd00284">
    <property type="entry name" value="Cytochrome_b_N"/>
    <property type="match status" value="1"/>
</dbReference>
<dbReference type="FunFam" id="1.20.810.10:FF:000002">
    <property type="entry name" value="Cytochrome b"/>
    <property type="match status" value="1"/>
</dbReference>
<dbReference type="Gene3D" id="1.20.810.10">
    <property type="entry name" value="Cytochrome Bc1 Complex, Chain C"/>
    <property type="match status" value="1"/>
</dbReference>
<dbReference type="InterPro" id="IPR005798">
    <property type="entry name" value="Cyt_b/b6_C"/>
</dbReference>
<dbReference type="InterPro" id="IPR036150">
    <property type="entry name" value="Cyt_b/b6_C_sf"/>
</dbReference>
<dbReference type="InterPro" id="IPR005797">
    <property type="entry name" value="Cyt_b/b6_N"/>
</dbReference>
<dbReference type="InterPro" id="IPR027387">
    <property type="entry name" value="Cytb/b6-like_sf"/>
</dbReference>
<dbReference type="InterPro" id="IPR030689">
    <property type="entry name" value="Cytochrome_b"/>
</dbReference>
<dbReference type="InterPro" id="IPR048260">
    <property type="entry name" value="Cytochrome_b_C_euk/bac"/>
</dbReference>
<dbReference type="InterPro" id="IPR048259">
    <property type="entry name" value="Cytochrome_b_N_euk/bac"/>
</dbReference>
<dbReference type="InterPro" id="IPR016174">
    <property type="entry name" value="Di-haem_cyt_TM"/>
</dbReference>
<dbReference type="PANTHER" id="PTHR19271">
    <property type="entry name" value="CYTOCHROME B"/>
    <property type="match status" value="1"/>
</dbReference>
<dbReference type="PANTHER" id="PTHR19271:SF16">
    <property type="entry name" value="CYTOCHROME B"/>
    <property type="match status" value="1"/>
</dbReference>
<dbReference type="Pfam" id="PF00032">
    <property type="entry name" value="Cytochrom_B_C"/>
    <property type="match status" value="1"/>
</dbReference>
<dbReference type="Pfam" id="PF00033">
    <property type="entry name" value="Cytochrome_B"/>
    <property type="match status" value="1"/>
</dbReference>
<dbReference type="PIRSF" id="PIRSF038885">
    <property type="entry name" value="COB"/>
    <property type="match status" value="1"/>
</dbReference>
<dbReference type="SUPFAM" id="SSF81648">
    <property type="entry name" value="a domain/subunit of cytochrome bc1 complex (Ubiquinol-cytochrome c reductase)"/>
    <property type="match status" value="1"/>
</dbReference>
<dbReference type="SUPFAM" id="SSF81342">
    <property type="entry name" value="Transmembrane di-heme cytochromes"/>
    <property type="match status" value="1"/>
</dbReference>
<dbReference type="PROSITE" id="PS51003">
    <property type="entry name" value="CYTB_CTER"/>
    <property type="match status" value="1"/>
</dbReference>
<dbReference type="PROSITE" id="PS51002">
    <property type="entry name" value="CYTB_NTER"/>
    <property type="match status" value="1"/>
</dbReference>
<keyword id="KW-0249">Electron transport</keyword>
<keyword id="KW-0349">Heme</keyword>
<keyword id="KW-0408">Iron</keyword>
<keyword id="KW-0472">Membrane</keyword>
<keyword id="KW-0479">Metal-binding</keyword>
<keyword id="KW-0496">Mitochondrion</keyword>
<keyword id="KW-0999">Mitochondrion inner membrane</keyword>
<keyword id="KW-0679">Respiratory chain</keyword>
<keyword id="KW-0812">Transmembrane</keyword>
<keyword id="KW-1133">Transmembrane helix</keyword>
<keyword id="KW-0813">Transport</keyword>
<keyword id="KW-0830">Ubiquinone</keyword>
<accession>P41286</accession>
<proteinExistence type="inferred from homology"/>